<gene>
    <name type="primary">LYZ</name>
</gene>
<protein>
    <recommendedName>
        <fullName>Lysozyme C</fullName>
        <ecNumber>3.2.1.17</ecNumber>
    </recommendedName>
    <alternativeName>
        <fullName>1,4-beta-N-acetylmuramidase C</fullName>
    </alternativeName>
</protein>
<sequence length="49" mass="5570">SKMKKCEFAKIAKEQHMDGYHGVSLADWVCLVNNESDFNTKAINRNKGI</sequence>
<dbReference type="EC" id="3.2.1.17"/>
<dbReference type="PIR" id="PL0163">
    <property type="entry name" value="PL0163"/>
</dbReference>
<dbReference type="SMR" id="P21776"/>
<dbReference type="CAZy" id="GH22">
    <property type="family name" value="Glycoside Hydrolase Family 22"/>
</dbReference>
<dbReference type="GO" id="GO:0005576">
    <property type="term" value="C:extracellular region"/>
    <property type="evidence" value="ECO:0007669"/>
    <property type="project" value="UniProtKB-SubCell"/>
</dbReference>
<dbReference type="GO" id="GO:0003796">
    <property type="term" value="F:lysozyme activity"/>
    <property type="evidence" value="ECO:0007669"/>
    <property type="project" value="UniProtKB-EC"/>
</dbReference>
<dbReference type="GO" id="GO:0050829">
    <property type="term" value="P:defense response to Gram-negative bacterium"/>
    <property type="evidence" value="ECO:0007669"/>
    <property type="project" value="TreeGrafter"/>
</dbReference>
<dbReference type="GO" id="GO:0050830">
    <property type="term" value="P:defense response to Gram-positive bacterium"/>
    <property type="evidence" value="ECO:0007669"/>
    <property type="project" value="TreeGrafter"/>
</dbReference>
<dbReference type="GO" id="GO:0031640">
    <property type="term" value="P:killing of cells of another organism"/>
    <property type="evidence" value="ECO:0007669"/>
    <property type="project" value="UniProtKB-KW"/>
</dbReference>
<dbReference type="Gene3D" id="1.10.530.10">
    <property type="match status" value="1"/>
</dbReference>
<dbReference type="InterPro" id="IPR001916">
    <property type="entry name" value="Glyco_hydro_22"/>
</dbReference>
<dbReference type="InterPro" id="IPR023346">
    <property type="entry name" value="Lysozyme-like_dom_sf"/>
</dbReference>
<dbReference type="PANTHER" id="PTHR11407">
    <property type="entry name" value="LYSOZYME C"/>
    <property type="match status" value="1"/>
</dbReference>
<dbReference type="PANTHER" id="PTHR11407:SF28">
    <property type="entry name" value="LYSOZYME C"/>
    <property type="match status" value="1"/>
</dbReference>
<dbReference type="Pfam" id="PF00062">
    <property type="entry name" value="Lys"/>
    <property type="match status" value="1"/>
</dbReference>
<dbReference type="SUPFAM" id="SSF53955">
    <property type="entry name" value="Lysozyme-like"/>
    <property type="match status" value="1"/>
</dbReference>
<dbReference type="PROSITE" id="PS51348">
    <property type="entry name" value="GLYCOSYL_HYDROL_F22_2"/>
    <property type="match status" value="1"/>
</dbReference>
<feature type="chain" id="PRO_0000208854" description="Lysozyme C">
    <location>
        <begin position="1"/>
        <end position="49" status="greater than"/>
    </location>
</feature>
<feature type="domain" description="C-type lysozyme" evidence="1">
    <location>
        <begin position="1"/>
        <end position="49" status="greater than"/>
    </location>
</feature>
<feature type="active site" evidence="1">
    <location>
        <position position="35"/>
    </location>
</feature>
<feature type="non-terminal residue">
    <location>
        <position position="49"/>
    </location>
</feature>
<proteinExistence type="evidence at protein level"/>
<organism>
    <name type="scientific">Pseudocheirus peregrinus</name>
    <name type="common">Common ring-tailed possum</name>
    <dbReference type="NCBI Taxonomy" id="9333"/>
    <lineage>
        <taxon>Eukaryota</taxon>
        <taxon>Metazoa</taxon>
        <taxon>Chordata</taxon>
        <taxon>Craniata</taxon>
        <taxon>Vertebrata</taxon>
        <taxon>Euteleostomi</taxon>
        <taxon>Mammalia</taxon>
        <taxon>Metatheria</taxon>
        <taxon>Diprotodontia</taxon>
        <taxon>Pseudocheiridae</taxon>
        <taxon>Pseudocheirus</taxon>
    </lineage>
</organism>
<comment type="function">
    <text>Lysozymes have primarily a bacteriolytic function; those in tissues and body fluids are associated with the monocyte-macrophage system and enhance the activity of immunoagents.</text>
</comment>
<comment type="catalytic activity">
    <reaction>
        <text>Hydrolysis of (1-&gt;4)-beta-linkages between N-acetylmuramic acid and N-acetyl-D-glucosamine residues in a peptidoglycan and between N-acetyl-D-glucosamine residues in chitodextrins.</text>
        <dbReference type="EC" id="3.2.1.17"/>
    </reaction>
</comment>
<comment type="subunit">
    <text>Monomer.</text>
</comment>
<comment type="subcellular location">
    <subcellularLocation>
        <location>Secreted</location>
    </subcellularLocation>
</comment>
<comment type="miscellaneous">
    <text>Lysozyme C is capable of both hydrolysis and transglycosylation; it also shows a slight esterase activity. It acts rapidly on both peptide-substituted and unsubstituted peptidoglycan, and slowly on chitin oligosaccharides.</text>
</comment>
<comment type="similarity">
    <text evidence="1">Belongs to the glycosyl hydrolase 22 family.</text>
</comment>
<keyword id="KW-0929">Antimicrobial</keyword>
<keyword id="KW-0081">Bacteriolytic enzyme</keyword>
<keyword id="KW-0903">Direct protein sequencing</keyword>
<keyword id="KW-0326">Glycosidase</keyword>
<keyword id="KW-0378">Hydrolase</keyword>
<keyword id="KW-0494">Milk protein</keyword>
<keyword id="KW-0964">Secreted</keyword>
<accession>P21776</accession>
<evidence type="ECO:0000255" key="1">
    <source>
        <dbReference type="PROSITE-ProRule" id="PRU00680"/>
    </source>
</evidence>
<reference key="1">
    <citation type="journal article" date="1989" name="Comp. Biochem. Physiol.">
        <title>Isolation, partial sequence and asynchronous appearance during lactation of lysozyme and alpha-lactalbumin in the milk of a marsupial, the common ringtail possum (Pseudocheirus peregrinus).</title>
        <authorList>
            <person name="Nicholas K.R."/>
            <person name="Loughnan M."/>
            <person name="Messer M."/>
            <person name="Munks S."/>
            <person name="Griffiths M."/>
            <person name="Shaw D."/>
        </authorList>
    </citation>
    <scope>PROTEIN SEQUENCE</scope>
    <source>
        <tissue>Milk</tissue>
    </source>
</reference>
<name>LYSC_PSEPE</name>